<sequence>MFELPSGAEIQSIIATLKASVGFFIPEIYLSLLFMILIVVDLVVKGRKSTLLSVFSLVGLAGSLYFIYQQHAMQAGEFFFGMYVLDGFAIFFKYFFVLSGMLAVVITMADEQFEREISSMGEYYALVVAMVVGMMMMASSSDLLMIFLSMELVSFTAFILAGYFKSNMRSSEAALKYLIYGAVSSGLMIYGFSLIYGVTAQTNLIAISRELALHGADSFVMLFAALLVLAGFGYKIGAVPFHFWAPDVYEGSPTPVTAYLSVASKAAGFALLMRFVYVALPHTNNVQAATLGIDWFTLLVILAVASMIYGNVVALWQKNVKRLLAYSSIAHAGYALLGVIVMDKLGTQATLFYLLSYLLMNFGAFFVVVLIANRTGSESLDDYRGLGKSMPLAGAALTVFLISLVGLPPTIGFIGKLMVFSALIAKGSIFMWLALIGILTSVISLYYYMLIPLNMYLREPVQHASSNTGTQPRLVAQLFMGALMLLTIYFGLFFAPLSDFARYSASIFGLQLQ</sequence>
<evidence type="ECO:0000255" key="1">
    <source>
        <dbReference type="HAMAP-Rule" id="MF_00445"/>
    </source>
</evidence>
<feature type="chain" id="PRO_0000391125" description="NADH-quinone oxidoreductase subunit N">
    <location>
        <begin position="1"/>
        <end position="513"/>
    </location>
</feature>
<feature type="transmembrane region" description="Helical" evidence="1">
    <location>
        <begin position="20"/>
        <end position="40"/>
    </location>
</feature>
<feature type="transmembrane region" description="Helical" evidence="1">
    <location>
        <begin position="49"/>
        <end position="69"/>
    </location>
</feature>
<feature type="transmembrane region" description="Helical" evidence="1">
    <location>
        <begin position="88"/>
        <end position="108"/>
    </location>
</feature>
<feature type="transmembrane region" description="Helical" evidence="1">
    <location>
        <begin position="117"/>
        <end position="137"/>
    </location>
</feature>
<feature type="transmembrane region" description="Helical" evidence="1">
    <location>
        <begin position="144"/>
        <end position="164"/>
    </location>
</feature>
<feature type="transmembrane region" description="Helical" evidence="1">
    <location>
        <begin position="178"/>
        <end position="198"/>
    </location>
</feature>
<feature type="transmembrane region" description="Helical" evidence="1">
    <location>
        <begin position="219"/>
        <end position="239"/>
    </location>
</feature>
<feature type="transmembrane region" description="Helical" evidence="1">
    <location>
        <begin position="260"/>
        <end position="280"/>
    </location>
</feature>
<feature type="transmembrane region" description="Helical" evidence="1">
    <location>
        <begin position="295"/>
        <end position="315"/>
    </location>
</feature>
<feature type="transmembrane region" description="Helical" evidence="1">
    <location>
        <begin position="323"/>
        <end position="343"/>
    </location>
</feature>
<feature type="transmembrane region" description="Helical" evidence="1">
    <location>
        <begin position="351"/>
        <end position="371"/>
    </location>
</feature>
<feature type="transmembrane region" description="Helical" evidence="1">
    <location>
        <begin position="394"/>
        <end position="414"/>
    </location>
</feature>
<feature type="transmembrane region" description="Helical" evidence="1">
    <location>
        <begin position="429"/>
        <end position="451"/>
    </location>
</feature>
<feature type="transmembrane region" description="Helical" evidence="1">
    <location>
        <begin position="474"/>
        <end position="494"/>
    </location>
</feature>
<protein>
    <recommendedName>
        <fullName evidence="1">NADH-quinone oxidoreductase subunit N</fullName>
        <ecNumber evidence="1">7.1.1.-</ecNumber>
    </recommendedName>
    <alternativeName>
        <fullName evidence="1">NADH dehydrogenase I subunit N</fullName>
    </alternativeName>
    <alternativeName>
        <fullName evidence="1">NDH-1 subunit N</fullName>
    </alternativeName>
</protein>
<name>NUON_CHLCH</name>
<keyword id="KW-0997">Cell inner membrane</keyword>
<keyword id="KW-1003">Cell membrane</keyword>
<keyword id="KW-0472">Membrane</keyword>
<keyword id="KW-0520">NAD</keyword>
<keyword id="KW-0874">Quinone</keyword>
<keyword id="KW-1278">Translocase</keyword>
<keyword id="KW-0812">Transmembrane</keyword>
<keyword id="KW-1133">Transmembrane helix</keyword>
<keyword id="KW-0813">Transport</keyword>
<accession>Q3ASV8</accession>
<comment type="function">
    <text evidence="1">NDH-1 shuttles electrons from NADH, via FMN and iron-sulfur (Fe-S) centers, to quinones in the respiratory chain. The immediate electron acceptor for the enzyme in this species is believed to be a menaquinone. Couples the redox reaction to proton translocation (for every two electrons transferred, four hydrogen ions are translocated across the cytoplasmic membrane), and thus conserves the redox energy in a proton gradient.</text>
</comment>
<comment type="catalytic activity">
    <reaction evidence="1">
        <text>a quinone + NADH + 5 H(+)(in) = a quinol + NAD(+) + 4 H(+)(out)</text>
        <dbReference type="Rhea" id="RHEA:57888"/>
        <dbReference type="ChEBI" id="CHEBI:15378"/>
        <dbReference type="ChEBI" id="CHEBI:24646"/>
        <dbReference type="ChEBI" id="CHEBI:57540"/>
        <dbReference type="ChEBI" id="CHEBI:57945"/>
        <dbReference type="ChEBI" id="CHEBI:132124"/>
    </reaction>
</comment>
<comment type="subunit">
    <text evidence="1">NDH-1 is composed of 14 different subunits. Subunits NuoA, H, J, K, L, M, N constitute the membrane sector of the complex.</text>
</comment>
<comment type="subcellular location">
    <subcellularLocation>
        <location evidence="1">Cell inner membrane</location>
        <topology evidence="1">Multi-pass membrane protein</topology>
    </subcellularLocation>
</comment>
<comment type="similarity">
    <text evidence="1">Belongs to the complex I subunit 2 family.</text>
</comment>
<gene>
    <name evidence="1" type="primary">nuoN</name>
    <name type="ordered locus">Cag_0644</name>
</gene>
<proteinExistence type="inferred from homology"/>
<reference key="1">
    <citation type="submission" date="2005-08" db="EMBL/GenBank/DDBJ databases">
        <title>Complete sequence of Chlorobium chlorochromatii CaD3.</title>
        <authorList>
            <consortium name="US DOE Joint Genome Institute"/>
            <person name="Copeland A."/>
            <person name="Lucas S."/>
            <person name="Lapidus A."/>
            <person name="Barry K."/>
            <person name="Detter J.C."/>
            <person name="Glavina T."/>
            <person name="Hammon N."/>
            <person name="Israni S."/>
            <person name="Pitluck S."/>
            <person name="Bryant D."/>
            <person name="Schmutz J."/>
            <person name="Larimer F."/>
            <person name="Land M."/>
            <person name="Kyrpides N."/>
            <person name="Ivanova N."/>
            <person name="Richardson P."/>
        </authorList>
    </citation>
    <scope>NUCLEOTIDE SEQUENCE [LARGE SCALE GENOMIC DNA]</scope>
    <source>
        <strain>CaD3</strain>
    </source>
</reference>
<dbReference type="EC" id="7.1.1.-" evidence="1"/>
<dbReference type="EMBL" id="CP000108">
    <property type="protein sequence ID" value="ABB27917.1"/>
    <property type="molecule type" value="Genomic_DNA"/>
</dbReference>
<dbReference type="SMR" id="Q3ASV8"/>
<dbReference type="STRING" id="340177.Cag_0644"/>
<dbReference type="KEGG" id="cch:Cag_0644"/>
<dbReference type="eggNOG" id="COG1007">
    <property type="taxonomic scope" value="Bacteria"/>
</dbReference>
<dbReference type="HOGENOM" id="CLU_007100_1_2_10"/>
<dbReference type="OrthoDB" id="9811718at2"/>
<dbReference type="GO" id="GO:0005886">
    <property type="term" value="C:plasma membrane"/>
    <property type="evidence" value="ECO:0007669"/>
    <property type="project" value="UniProtKB-SubCell"/>
</dbReference>
<dbReference type="GO" id="GO:0008137">
    <property type="term" value="F:NADH dehydrogenase (ubiquinone) activity"/>
    <property type="evidence" value="ECO:0007669"/>
    <property type="project" value="InterPro"/>
</dbReference>
<dbReference type="GO" id="GO:0050136">
    <property type="term" value="F:NADH:ubiquinone reductase (non-electrogenic) activity"/>
    <property type="evidence" value="ECO:0007669"/>
    <property type="project" value="UniProtKB-UniRule"/>
</dbReference>
<dbReference type="GO" id="GO:0048038">
    <property type="term" value="F:quinone binding"/>
    <property type="evidence" value="ECO:0007669"/>
    <property type="project" value="UniProtKB-KW"/>
</dbReference>
<dbReference type="GO" id="GO:0042773">
    <property type="term" value="P:ATP synthesis coupled electron transport"/>
    <property type="evidence" value="ECO:0007669"/>
    <property type="project" value="InterPro"/>
</dbReference>
<dbReference type="HAMAP" id="MF_00445">
    <property type="entry name" value="NDH1_NuoN_1"/>
    <property type="match status" value="1"/>
</dbReference>
<dbReference type="InterPro" id="IPR010096">
    <property type="entry name" value="NADH-Q_OxRdtase_suN/2"/>
</dbReference>
<dbReference type="InterPro" id="IPR001750">
    <property type="entry name" value="ND/Mrp_TM"/>
</dbReference>
<dbReference type="NCBIfam" id="TIGR01770">
    <property type="entry name" value="NDH_I_N"/>
    <property type="match status" value="1"/>
</dbReference>
<dbReference type="PANTHER" id="PTHR22773">
    <property type="entry name" value="NADH DEHYDROGENASE"/>
    <property type="match status" value="1"/>
</dbReference>
<dbReference type="Pfam" id="PF00361">
    <property type="entry name" value="Proton_antipo_M"/>
    <property type="match status" value="1"/>
</dbReference>
<organism>
    <name type="scientific">Chlorobium chlorochromatii (strain CaD3)</name>
    <dbReference type="NCBI Taxonomy" id="340177"/>
    <lineage>
        <taxon>Bacteria</taxon>
        <taxon>Pseudomonadati</taxon>
        <taxon>Chlorobiota</taxon>
        <taxon>Chlorobiia</taxon>
        <taxon>Chlorobiales</taxon>
        <taxon>Chlorobiaceae</taxon>
        <taxon>Chlorobium/Pelodictyon group</taxon>
        <taxon>Chlorobium</taxon>
    </lineage>
</organism>